<keyword id="KW-0007">Acetylation</keyword>
<keyword id="KW-0067">ATP-binding</keyword>
<keyword id="KW-0547">Nucleotide-binding</keyword>
<keyword id="KW-0597">Phosphoprotein</keyword>
<keyword id="KW-1185">Reference proteome</keyword>
<keyword id="KW-0677">Repeat</keyword>
<evidence type="ECO:0000250" key="1">
    <source>
        <dbReference type="UniProtKB" id="Q9UG63"/>
    </source>
</evidence>
<evidence type="ECO:0000255" key="2">
    <source>
        <dbReference type="PROSITE-ProRule" id="PRU00434"/>
    </source>
</evidence>
<evidence type="ECO:0000256" key="3">
    <source>
        <dbReference type="SAM" id="MobiDB-lite"/>
    </source>
</evidence>
<evidence type="ECO:0000305" key="4"/>
<comment type="similarity">
    <text evidence="4">Belongs to the ABC transporter superfamily. ABCF family. EF3 subfamily.</text>
</comment>
<comment type="caution">
    <text evidence="4">Lacks transmembrane domains and is probably not involved in transport.</text>
</comment>
<organism>
    <name type="scientific">Bos taurus</name>
    <name type="common">Bovine</name>
    <dbReference type="NCBI Taxonomy" id="9913"/>
    <lineage>
        <taxon>Eukaryota</taxon>
        <taxon>Metazoa</taxon>
        <taxon>Chordata</taxon>
        <taxon>Craniata</taxon>
        <taxon>Vertebrata</taxon>
        <taxon>Euteleostomi</taxon>
        <taxon>Mammalia</taxon>
        <taxon>Eutheria</taxon>
        <taxon>Laurasiatheria</taxon>
        <taxon>Artiodactyla</taxon>
        <taxon>Ruminantia</taxon>
        <taxon>Pecora</taxon>
        <taxon>Bovidae</taxon>
        <taxon>Bovinae</taxon>
        <taxon>Bos</taxon>
    </lineage>
</organism>
<feature type="chain" id="PRO_0000238917" description="ATP-binding cassette sub-family F member 2">
    <location>
        <begin position="1"/>
        <end position="625"/>
    </location>
</feature>
<feature type="domain" description="ABC transporter 1" evidence="2">
    <location>
        <begin position="88"/>
        <end position="327"/>
    </location>
</feature>
<feature type="domain" description="ABC transporter 2" evidence="2">
    <location>
        <begin position="398"/>
        <end position="615"/>
    </location>
</feature>
<feature type="region of interest" description="Disordered" evidence="3">
    <location>
        <begin position="1"/>
        <end position="54"/>
    </location>
</feature>
<feature type="compositionally biased region" description="Basic and acidic residues" evidence="3">
    <location>
        <begin position="40"/>
        <end position="54"/>
    </location>
</feature>
<feature type="binding site" evidence="2">
    <location>
        <begin position="120"/>
        <end position="127"/>
    </location>
    <ligand>
        <name>ATP</name>
        <dbReference type="ChEBI" id="CHEBI:30616"/>
        <label>1</label>
    </ligand>
</feature>
<feature type="binding site" evidence="2">
    <location>
        <begin position="432"/>
        <end position="439"/>
    </location>
    <ligand>
        <name>ATP</name>
        <dbReference type="ChEBI" id="CHEBI:30616"/>
        <label>2</label>
    </ligand>
</feature>
<feature type="modified residue" description="Phosphothreonine" evidence="1">
    <location>
        <position position="220"/>
    </location>
</feature>
<feature type="modified residue" description="N6-acetyllysine" evidence="1">
    <location>
        <position position="306"/>
    </location>
</feature>
<feature type="modified residue" description="Phosphoserine" evidence="1">
    <location>
        <position position="514"/>
    </location>
</feature>
<accession>Q2KJA2</accession>
<accession>Q1JPK5</accession>
<proteinExistence type="evidence at transcript level"/>
<name>ABCF2_BOVIN</name>
<gene>
    <name type="primary">ABCF2</name>
</gene>
<dbReference type="EMBL" id="BT025348">
    <property type="protein sequence ID" value="ABF57304.1"/>
    <property type="molecule type" value="mRNA"/>
</dbReference>
<dbReference type="EMBL" id="BC105443">
    <property type="protein sequence ID" value="AAI05444.1"/>
    <property type="molecule type" value="mRNA"/>
</dbReference>
<dbReference type="RefSeq" id="NP_001039601.1">
    <property type="nucleotide sequence ID" value="NM_001046136.2"/>
</dbReference>
<dbReference type="RefSeq" id="XP_005205889.1">
    <property type="nucleotide sequence ID" value="XM_005205832.5"/>
</dbReference>
<dbReference type="SMR" id="Q2KJA2"/>
<dbReference type="FunCoup" id="Q2KJA2">
    <property type="interactions" value="3474"/>
</dbReference>
<dbReference type="STRING" id="9913.ENSBTAP00000068739"/>
<dbReference type="PaxDb" id="9913-ENSBTAP00000000799"/>
<dbReference type="GeneID" id="513061"/>
<dbReference type="KEGG" id="bta:513061"/>
<dbReference type="CTD" id="10061"/>
<dbReference type="VEuPathDB" id="HostDB:ENSBTAG00000000607"/>
<dbReference type="eggNOG" id="KOG0927">
    <property type="taxonomic scope" value="Eukaryota"/>
</dbReference>
<dbReference type="HOGENOM" id="CLU_000604_36_6_1"/>
<dbReference type="InParanoid" id="Q2KJA2"/>
<dbReference type="OMA" id="QYEGTML"/>
<dbReference type="OrthoDB" id="2110130at2759"/>
<dbReference type="TreeFam" id="TF105208"/>
<dbReference type="Proteomes" id="UP000009136">
    <property type="component" value="Chromosome 4"/>
</dbReference>
<dbReference type="Bgee" id="ENSBTAG00000000607">
    <property type="expression patterns" value="Expressed in spermatid and 106 other cell types or tissues"/>
</dbReference>
<dbReference type="GO" id="GO:0005524">
    <property type="term" value="F:ATP binding"/>
    <property type="evidence" value="ECO:0000318"/>
    <property type="project" value="GO_Central"/>
</dbReference>
<dbReference type="GO" id="GO:0016887">
    <property type="term" value="F:ATP hydrolysis activity"/>
    <property type="evidence" value="ECO:0007669"/>
    <property type="project" value="InterPro"/>
</dbReference>
<dbReference type="CDD" id="cd03221">
    <property type="entry name" value="ABCF_EF-3"/>
    <property type="match status" value="2"/>
</dbReference>
<dbReference type="FunFam" id="3.40.50.300:FF:000467">
    <property type="entry name" value="ATP-binding cassette sub-family F member 2"/>
    <property type="match status" value="1"/>
</dbReference>
<dbReference type="FunFam" id="3.40.50.300:FF:000104">
    <property type="entry name" value="ATP-binding cassette sub-family F member 3"/>
    <property type="match status" value="1"/>
</dbReference>
<dbReference type="Gene3D" id="3.40.50.300">
    <property type="entry name" value="P-loop containing nucleotide triphosphate hydrolases"/>
    <property type="match status" value="2"/>
</dbReference>
<dbReference type="InterPro" id="IPR003593">
    <property type="entry name" value="AAA+_ATPase"/>
</dbReference>
<dbReference type="InterPro" id="IPR032781">
    <property type="entry name" value="ABC_tran_Xtn"/>
</dbReference>
<dbReference type="InterPro" id="IPR003439">
    <property type="entry name" value="ABC_transporter-like_ATP-bd"/>
</dbReference>
<dbReference type="InterPro" id="IPR017871">
    <property type="entry name" value="ABC_transporter-like_CS"/>
</dbReference>
<dbReference type="InterPro" id="IPR050611">
    <property type="entry name" value="ABCF_EF3_subfamily"/>
</dbReference>
<dbReference type="InterPro" id="IPR027417">
    <property type="entry name" value="P-loop_NTPase"/>
</dbReference>
<dbReference type="PANTHER" id="PTHR19211:SF15">
    <property type="entry name" value="ATP-BINDING CASSETTE SUB-FAMILY F MEMBER 2"/>
    <property type="match status" value="1"/>
</dbReference>
<dbReference type="PANTHER" id="PTHR19211">
    <property type="entry name" value="ATP-BINDING TRANSPORT PROTEIN-RELATED"/>
    <property type="match status" value="1"/>
</dbReference>
<dbReference type="Pfam" id="PF00005">
    <property type="entry name" value="ABC_tran"/>
    <property type="match status" value="2"/>
</dbReference>
<dbReference type="Pfam" id="PF12848">
    <property type="entry name" value="ABC_tran_Xtn"/>
    <property type="match status" value="1"/>
</dbReference>
<dbReference type="SMART" id="SM00382">
    <property type="entry name" value="AAA"/>
    <property type="match status" value="2"/>
</dbReference>
<dbReference type="SUPFAM" id="SSF52540">
    <property type="entry name" value="P-loop containing nucleoside triphosphate hydrolases"/>
    <property type="match status" value="2"/>
</dbReference>
<dbReference type="PROSITE" id="PS00211">
    <property type="entry name" value="ABC_TRANSPORTER_1"/>
    <property type="match status" value="1"/>
</dbReference>
<dbReference type="PROSITE" id="PS50893">
    <property type="entry name" value="ABC_TRANSPORTER_2"/>
    <property type="match status" value="2"/>
</dbReference>
<sequence length="625" mass="71475">MPSDLAKKKAAKKKEAAKARQRPRKGHEENGDAITEPQVAEERNEEANGRETTEVDLLTKELEDFEMKKAAARAVTGVLASHPNSTDAHIINLSLTFHGQELLSDTKLELNSGRRYGLIGLNGIGKSMLLSAIGKREVPIPEHIDIYHLTREMPPSDKTPLQCVMEVDTERAMLEREAERLAHEDAECEKLLELYERLEELDADKAEMRASRILHGLGFTPAMQRKKLKDFSGGWRMRVALARALFIRPFMLLLDEPTNHLDLDACVWLEEELKTFKRILVLVSHSQDFLNGVCTNIIHMHNKKLKYYTGNYDQYVKTRLELEENQMKRFHWEQDQIAHMKNYIARFGHGSAKLARQAQSKEKTLQKMMASGLTERVVSDKTLSFYFPPCGKIPPPVIMVQNVSFKYTKDGPCIYNNLEFGIDLDTRVALVGPNGAGKSTLLKLLTGELLPTDGMIRKHSHVKIGRYHQHLQEQLDLDLSPLEYMMKCYPEIKEKEEMRKIIGRYGLTGKQQVSPIRNLSDGQKCRVCLAWLAWQNPHMLFLDEPTNHLDIETIDALADAINDFEGGMMLVSHDFRLIQQVAQEIWVCEKQTITKWPGDILAYKEHLKSKLVGEEPQPTRRTHNV</sequence>
<protein>
    <recommendedName>
        <fullName>ATP-binding cassette sub-family F member 2</fullName>
    </recommendedName>
</protein>
<reference key="1">
    <citation type="journal article" date="2005" name="BMC Genomics">
        <title>Characterization of 954 bovine full-CDS cDNA sequences.</title>
        <authorList>
            <person name="Harhay G.P."/>
            <person name="Sonstegard T.S."/>
            <person name="Keele J.W."/>
            <person name="Heaton M.P."/>
            <person name="Clawson M.L."/>
            <person name="Snelling W.M."/>
            <person name="Wiedmann R.T."/>
            <person name="Van Tassell C.P."/>
            <person name="Smith T.P.L."/>
        </authorList>
    </citation>
    <scope>NUCLEOTIDE SEQUENCE [LARGE SCALE MRNA]</scope>
</reference>
<reference key="2">
    <citation type="submission" date="2005-09" db="EMBL/GenBank/DDBJ databases">
        <authorList>
            <consortium name="NIH - Mammalian Gene Collection (MGC) project"/>
        </authorList>
    </citation>
    <scope>NUCLEOTIDE SEQUENCE [LARGE SCALE MRNA]</scope>
    <source>
        <strain>Hereford</strain>
        <tissue>Thymus</tissue>
    </source>
</reference>